<feature type="chain" id="PRO_1000191108" description="Multidrug resistance protein MdtK">
    <location>
        <begin position="1"/>
        <end position="457"/>
    </location>
</feature>
<feature type="transmembrane region" description="Helical" evidence="1">
    <location>
        <begin position="11"/>
        <end position="31"/>
    </location>
</feature>
<feature type="transmembrane region" description="Helical" evidence="1">
    <location>
        <begin position="53"/>
        <end position="73"/>
    </location>
</feature>
<feature type="transmembrane region" description="Helical" evidence="1">
    <location>
        <begin position="93"/>
        <end position="113"/>
    </location>
</feature>
<feature type="transmembrane region" description="Helical" evidence="1">
    <location>
        <begin position="127"/>
        <end position="147"/>
    </location>
</feature>
<feature type="transmembrane region" description="Helical" evidence="1">
    <location>
        <begin position="160"/>
        <end position="180"/>
    </location>
</feature>
<feature type="transmembrane region" description="Helical" evidence="1">
    <location>
        <begin position="189"/>
        <end position="209"/>
    </location>
</feature>
<feature type="transmembrane region" description="Helical" evidence="1">
    <location>
        <begin position="243"/>
        <end position="263"/>
    </location>
</feature>
<feature type="transmembrane region" description="Helical" evidence="1">
    <location>
        <begin position="276"/>
        <end position="296"/>
    </location>
</feature>
<feature type="transmembrane region" description="Helical" evidence="1">
    <location>
        <begin position="314"/>
        <end position="334"/>
    </location>
</feature>
<feature type="transmembrane region" description="Helical" evidence="1">
    <location>
        <begin position="350"/>
        <end position="370"/>
    </location>
</feature>
<feature type="transmembrane region" description="Helical" evidence="1">
    <location>
        <begin position="387"/>
        <end position="407"/>
    </location>
</feature>
<feature type="transmembrane region" description="Helical" evidence="1">
    <location>
        <begin position="418"/>
        <end position="438"/>
    </location>
</feature>
<protein>
    <recommendedName>
        <fullName evidence="1">Multidrug resistance protein MdtK</fullName>
    </recommendedName>
    <alternativeName>
        <fullName evidence="1">Multidrug-efflux transporter</fullName>
    </alternativeName>
</protein>
<evidence type="ECO:0000255" key="1">
    <source>
        <dbReference type="HAMAP-Rule" id="MF_00400"/>
    </source>
</evidence>
<accession>B2U2G8</accession>
<comment type="function">
    <text evidence="1">Multidrug efflux pump that functions probably as a Na(+)/drug antiporter.</text>
</comment>
<comment type="subcellular location">
    <subcellularLocation>
        <location evidence="1">Cell inner membrane</location>
        <topology evidence="1">Multi-pass membrane protein</topology>
    </subcellularLocation>
</comment>
<comment type="similarity">
    <text evidence="1">Belongs to the multi antimicrobial extrusion (MATE) (TC 2.A.66.1) family. MdtK subfamily.</text>
</comment>
<name>MDTK_SHIB3</name>
<sequence length="457" mass="49475">MQKYISEARLLLALAIPVILAQIAQTAMGFVDTVMAGGYSATDMAAVAIGTSIWLPAILFGHGLLLALTPVIAQLNGSGRRERIAHQVRQGFWLAGFVSVLIMLVLWNAGYIIRSMENIDPALADKAVGYLRALLWGAPGYLFFQVARNQCEGLAKTKPGMVMGFIGLLVNIPVNYIFIYGHFGMPELGGVGCGVATAAVYWVMFLAMVSYIKRARSMRDIRNEKGTAKPDPAVMKRLIQLGLPIALALFFEVTLFAVVALLVSPLGIVDVAGHQIALNFSSLMFVLPMSLAAAVTIRVGYRLGQGSTLDAQTAARTGLMVGVCMATLTAIFTVSLREQIALLYNDNPEVVTLAAHLMLLAAVYQISDSIQVIGSGILRGYKDTRSIFYITFTAYWVLGLPSGYILALTDLVVEPMGPAGFWIGFIIGLTSAAIMMMLRMRFLQRLPSVIILQRASR</sequence>
<dbReference type="EMBL" id="CP001063">
    <property type="protein sequence ID" value="ACD08433.1"/>
    <property type="molecule type" value="Genomic_DNA"/>
</dbReference>
<dbReference type="RefSeq" id="WP_001174942.1">
    <property type="nucleotide sequence ID" value="NC_010658.1"/>
</dbReference>
<dbReference type="SMR" id="B2U2G8"/>
<dbReference type="STRING" id="344609.SbBS512_E1861"/>
<dbReference type="GeneID" id="75204509"/>
<dbReference type="KEGG" id="sbc:SbBS512_E1861"/>
<dbReference type="HOGENOM" id="CLU_012893_6_0_6"/>
<dbReference type="Proteomes" id="UP000001030">
    <property type="component" value="Chromosome"/>
</dbReference>
<dbReference type="GO" id="GO:0005886">
    <property type="term" value="C:plasma membrane"/>
    <property type="evidence" value="ECO:0007669"/>
    <property type="project" value="UniProtKB-SubCell"/>
</dbReference>
<dbReference type="GO" id="GO:0015297">
    <property type="term" value="F:antiporter activity"/>
    <property type="evidence" value="ECO:0007669"/>
    <property type="project" value="UniProtKB-UniRule"/>
</dbReference>
<dbReference type="GO" id="GO:0042910">
    <property type="term" value="F:xenobiotic transmembrane transporter activity"/>
    <property type="evidence" value="ECO:0007669"/>
    <property type="project" value="UniProtKB-UniRule"/>
</dbReference>
<dbReference type="GO" id="GO:0006814">
    <property type="term" value="P:sodium ion transport"/>
    <property type="evidence" value="ECO:0007669"/>
    <property type="project" value="UniProtKB-UniRule"/>
</dbReference>
<dbReference type="GO" id="GO:0006855">
    <property type="term" value="P:xenobiotic transmembrane transport"/>
    <property type="evidence" value="ECO:0007669"/>
    <property type="project" value="UniProtKB-UniRule"/>
</dbReference>
<dbReference type="CDD" id="cd13131">
    <property type="entry name" value="MATE_NorM_like"/>
    <property type="match status" value="1"/>
</dbReference>
<dbReference type="HAMAP" id="MF_00400">
    <property type="entry name" value="MdtK"/>
    <property type="match status" value="1"/>
</dbReference>
<dbReference type="InterPro" id="IPR002528">
    <property type="entry name" value="MATE_fam"/>
</dbReference>
<dbReference type="InterPro" id="IPR050222">
    <property type="entry name" value="MATE_MdtK"/>
</dbReference>
<dbReference type="InterPro" id="IPR048279">
    <property type="entry name" value="MdtK-like"/>
</dbReference>
<dbReference type="InterPro" id="IPR022913">
    <property type="entry name" value="Multidrug-R_MdtK"/>
</dbReference>
<dbReference type="NCBIfam" id="TIGR00797">
    <property type="entry name" value="matE"/>
    <property type="match status" value="1"/>
</dbReference>
<dbReference type="PANTHER" id="PTHR43298:SF2">
    <property type="entry name" value="FMN_FAD EXPORTER YEEO-RELATED"/>
    <property type="match status" value="1"/>
</dbReference>
<dbReference type="PANTHER" id="PTHR43298">
    <property type="entry name" value="MULTIDRUG RESISTANCE PROTEIN NORM-RELATED"/>
    <property type="match status" value="1"/>
</dbReference>
<dbReference type="Pfam" id="PF01554">
    <property type="entry name" value="MatE"/>
    <property type="match status" value="2"/>
</dbReference>
<dbReference type="PIRSF" id="PIRSF006603">
    <property type="entry name" value="DinF"/>
    <property type="match status" value="1"/>
</dbReference>
<keyword id="KW-0050">Antiport</keyword>
<keyword id="KW-0997">Cell inner membrane</keyword>
<keyword id="KW-1003">Cell membrane</keyword>
<keyword id="KW-0406">Ion transport</keyword>
<keyword id="KW-0472">Membrane</keyword>
<keyword id="KW-1185">Reference proteome</keyword>
<keyword id="KW-0915">Sodium</keyword>
<keyword id="KW-0739">Sodium transport</keyword>
<keyword id="KW-0812">Transmembrane</keyword>
<keyword id="KW-1133">Transmembrane helix</keyword>
<keyword id="KW-0813">Transport</keyword>
<gene>
    <name evidence="1" type="primary">mdtK</name>
    <name type="ordered locus">SbBS512_E1861</name>
</gene>
<reference key="1">
    <citation type="submission" date="2008-05" db="EMBL/GenBank/DDBJ databases">
        <title>Complete sequence of Shigella boydii serotype 18 strain BS512.</title>
        <authorList>
            <person name="Rasko D.A."/>
            <person name="Rosovitz M."/>
            <person name="Maurelli A.T."/>
            <person name="Myers G."/>
            <person name="Seshadri R."/>
            <person name="Cer R."/>
            <person name="Jiang L."/>
            <person name="Ravel J."/>
            <person name="Sebastian Y."/>
        </authorList>
    </citation>
    <scope>NUCLEOTIDE SEQUENCE [LARGE SCALE GENOMIC DNA]</scope>
    <source>
        <strain>CDC 3083-94 / BS512</strain>
    </source>
</reference>
<proteinExistence type="inferred from homology"/>
<organism>
    <name type="scientific">Shigella boydii serotype 18 (strain CDC 3083-94 / BS512)</name>
    <dbReference type="NCBI Taxonomy" id="344609"/>
    <lineage>
        <taxon>Bacteria</taxon>
        <taxon>Pseudomonadati</taxon>
        <taxon>Pseudomonadota</taxon>
        <taxon>Gammaproteobacteria</taxon>
        <taxon>Enterobacterales</taxon>
        <taxon>Enterobacteriaceae</taxon>
        <taxon>Shigella</taxon>
    </lineage>
</organism>